<keyword id="KW-0030">Aminoacyl-tRNA synthetase</keyword>
<keyword id="KW-0067">ATP-binding</keyword>
<keyword id="KW-0963">Cytoplasm</keyword>
<keyword id="KW-0436">Ligase</keyword>
<keyword id="KW-0479">Metal-binding</keyword>
<keyword id="KW-0547">Nucleotide-binding</keyword>
<keyword id="KW-0648">Protein biosynthesis</keyword>
<keyword id="KW-0862">Zinc</keyword>
<protein>
    <recommendedName>
        <fullName evidence="1">Isoleucine--tRNA ligase</fullName>
        <ecNumber evidence="1">6.1.1.5</ecNumber>
    </recommendedName>
    <alternativeName>
        <fullName evidence="1">Isoleucyl-tRNA synthetase</fullName>
        <shortName evidence="1">IleRS</shortName>
    </alternativeName>
</protein>
<evidence type="ECO:0000255" key="1">
    <source>
        <dbReference type="HAMAP-Rule" id="MF_02002"/>
    </source>
</evidence>
<name>SYI_MANSM</name>
<accession>Q65RQ2</accession>
<reference key="1">
    <citation type="journal article" date="2004" name="Nat. Biotechnol.">
        <title>The genome sequence of the capnophilic rumen bacterium Mannheimia succiniciproducens.</title>
        <authorList>
            <person name="Hong S.H."/>
            <person name="Kim J.S."/>
            <person name="Lee S.Y."/>
            <person name="In Y.H."/>
            <person name="Choi S.S."/>
            <person name="Rih J.-K."/>
            <person name="Kim C.H."/>
            <person name="Jeong H."/>
            <person name="Hur C.G."/>
            <person name="Kim J.J."/>
        </authorList>
    </citation>
    <scope>NUCLEOTIDE SEQUENCE [LARGE SCALE GENOMIC DNA]</scope>
    <source>
        <strain>KCTC 0769BP / MBEL55E</strain>
    </source>
</reference>
<organism>
    <name type="scientific">Mannheimia succiniciproducens (strain KCTC 0769BP / MBEL55E)</name>
    <dbReference type="NCBI Taxonomy" id="221988"/>
    <lineage>
        <taxon>Bacteria</taxon>
        <taxon>Pseudomonadati</taxon>
        <taxon>Pseudomonadota</taxon>
        <taxon>Gammaproteobacteria</taxon>
        <taxon>Pasteurellales</taxon>
        <taxon>Pasteurellaceae</taxon>
        <taxon>Basfia</taxon>
    </lineage>
</organism>
<sequence>MVRKMSEQKDYKNTLNLPETGFPMRGDLAKREPGMLKNWYDNDLYQKIRQSSKGKKSFILHDGPPYANGSIHIGHAVNKILKDIIIKSKTALGFDSPYIPGWDCHGLPIELKVEGLVGKPNQKISAAQFREECRKYAREQVEGQKKDFIRLGVLGDWDNPYLTMNFDTEANIIRAFGKAVANGHLYKGSKPVHWCLDCASSLAEAEVEYEDRTSPSIYVRFAAADESAVENKFVLTEQGKGKLSAVIWTTTPWTLPSNKAISINPELEYQIVQFGDERFILAAELVESVAQAVGVESWKALGSAKGSDLELLQFKHPFYDYNVPFILGDHVTLDGGTGLVHTAPDHGQDDYVVARKYNIGMAGLIGNDGKFNSNAKFFAGLGVFEANGKVLEKLDEVGALLKLEKIRHSYPHCWRHKTPIIFRATPQWFIGMETQGLRQQALSEIKKVRWIPDWGQARIEKMVENRPDWCISRQRTWGVPVALFIHKETEQLHPRTLELIEEVAKLVERKGIQAWWDLDAKDLLGDDAAHYSKVPDTLDVWFDSGSTYYSVVKNRPEFNGKEADMYLEGSDQHRGWFMSSLMLSTATDNKAPYKQVLTHGFTVDGQGRKMSKSIGNIVTPQEVMDKFGGDILRLWVASTDYTGEMTVSDEILKRAADSYRRIRNTARFLLANLNGFDPKRDLVQAHEMISLDRWAVDCAFRAQAEIKEAYDNYQFHTVVQRLMKFCSVEMGSFYLDIIKDRQYTTKADSLARRSCQTALWHIAEALVRWMAPILSFTADEIWGYLPGERGEFVFTEEFYDGLFALDVSESLDDAYWQQVITVRNEVNRVLEQARNDKVIGGGLEAEVTIFANDEYSALLNKLGNELRFVTITSKAEVKTLADADVAEGEVAGLAIKAIRSANHKCPRCWHYSDSKDANSLCSRCEENVNGNGEERRFA</sequence>
<proteinExistence type="inferred from homology"/>
<dbReference type="EC" id="6.1.1.5" evidence="1"/>
<dbReference type="EMBL" id="AE016827">
    <property type="protein sequence ID" value="AAU38358.1"/>
    <property type="molecule type" value="Genomic_DNA"/>
</dbReference>
<dbReference type="SMR" id="Q65RQ2"/>
<dbReference type="STRING" id="221988.MS1751"/>
<dbReference type="KEGG" id="msu:MS1751"/>
<dbReference type="eggNOG" id="COG0060">
    <property type="taxonomic scope" value="Bacteria"/>
</dbReference>
<dbReference type="HOGENOM" id="CLU_001493_7_1_6"/>
<dbReference type="Proteomes" id="UP000000607">
    <property type="component" value="Chromosome"/>
</dbReference>
<dbReference type="GO" id="GO:0005829">
    <property type="term" value="C:cytosol"/>
    <property type="evidence" value="ECO:0007669"/>
    <property type="project" value="TreeGrafter"/>
</dbReference>
<dbReference type="GO" id="GO:0002161">
    <property type="term" value="F:aminoacyl-tRNA deacylase activity"/>
    <property type="evidence" value="ECO:0007669"/>
    <property type="project" value="InterPro"/>
</dbReference>
<dbReference type="GO" id="GO:0005524">
    <property type="term" value="F:ATP binding"/>
    <property type="evidence" value="ECO:0007669"/>
    <property type="project" value="UniProtKB-UniRule"/>
</dbReference>
<dbReference type="GO" id="GO:0004822">
    <property type="term" value="F:isoleucine-tRNA ligase activity"/>
    <property type="evidence" value="ECO:0007669"/>
    <property type="project" value="UniProtKB-UniRule"/>
</dbReference>
<dbReference type="GO" id="GO:0000049">
    <property type="term" value="F:tRNA binding"/>
    <property type="evidence" value="ECO:0007669"/>
    <property type="project" value="InterPro"/>
</dbReference>
<dbReference type="GO" id="GO:0008270">
    <property type="term" value="F:zinc ion binding"/>
    <property type="evidence" value="ECO:0007669"/>
    <property type="project" value="UniProtKB-UniRule"/>
</dbReference>
<dbReference type="GO" id="GO:0006428">
    <property type="term" value="P:isoleucyl-tRNA aminoacylation"/>
    <property type="evidence" value="ECO:0007669"/>
    <property type="project" value="UniProtKB-UniRule"/>
</dbReference>
<dbReference type="CDD" id="cd07960">
    <property type="entry name" value="Anticodon_Ia_Ile_BEm"/>
    <property type="match status" value="1"/>
</dbReference>
<dbReference type="CDD" id="cd00818">
    <property type="entry name" value="IleRS_core"/>
    <property type="match status" value="1"/>
</dbReference>
<dbReference type="FunFam" id="1.10.730.20:FF:000001">
    <property type="entry name" value="Isoleucine--tRNA ligase"/>
    <property type="match status" value="1"/>
</dbReference>
<dbReference type="FunFam" id="3.40.50.620:FF:000042">
    <property type="entry name" value="Isoleucine--tRNA ligase"/>
    <property type="match status" value="1"/>
</dbReference>
<dbReference type="FunFam" id="3.40.50.620:FF:000048">
    <property type="entry name" value="Isoleucine--tRNA ligase"/>
    <property type="match status" value="1"/>
</dbReference>
<dbReference type="Gene3D" id="1.10.730.20">
    <property type="match status" value="1"/>
</dbReference>
<dbReference type="Gene3D" id="3.40.50.620">
    <property type="entry name" value="HUPs"/>
    <property type="match status" value="2"/>
</dbReference>
<dbReference type="Gene3D" id="1.10.10.830">
    <property type="entry name" value="Ile-tRNA synthetase CP2 domain-like"/>
    <property type="match status" value="1"/>
</dbReference>
<dbReference type="Gene3D" id="3.90.740.10">
    <property type="entry name" value="Valyl/Leucyl/Isoleucyl-tRNA synthetase, editing domain"/>
    <property type="match status" value="1"/>
</dbReference>
<dbReference type="HAMAP" id="MF_02002">
    <property type="entry name" value="Ile_tRNA_synth_type1"/>
    <property type="match status" value="1"/>
</dbReference>
<dbReference type="InterPro" id="IPR001412">
    <property type="entry name" value="aa-tRNA-synth_I_CS"/>
</dbReference>
<dbReference type="InterPro" id="IPR002300">
    <property type="entry name" value="aa-tRNA-synth_Ia"/>
</dbReference>
<dbReference type="InterPro" id="IPR033708">
    <property type="entry name" value="Anticodon_Ile_BEm"/>
</dbReference>
<dbReference type="InterPro" id="IPR002301">
    <property type="entry name" value="Ile-tRNA-ligase"/>
</dbReference>
<dbReference type="InterPro" id="IPR023585">
    <property type="entry name" value="Ile-tRNA-ligase_type1"/>
</dbReference>
<dbReference type="InterPro" id="IPR050081">
    <property type="entry name" value="Ile-tRNA_ligase"/>
</dbReference>
<dbReference type="InterPro" id="IPR013155">
    <property type="entry name" value="M/V/L/I-tRNA-synth_anticd-bd"/>
</dbReference>
<dbReference type="InterPro" id="IPR014729">
    <property type="entry name" value="Rossmann-like_a/b/a_fold"/>
</dbReference>
<dbReference type="InterPro" id="IPR009080">
    <property type="entry name" value="tRNAsynth_Ia_anticodon-bd"/>
</dbReference>
<dbReference type="InterPro" id="IPR009008">
    <property type="entry name" value="Val/Leu/Ile-tRNA-synth_edit"/>
</dbReference>
<dbReference type="NCBIfam" id="TIGR00392">
    <property type="entry name" value="ileS"/>
    <property type="match status" value="1"/>
</dbReference>
<dbReference type="PANTHER" id="PTHR42765:SF1">
    <property type="entry name" value="ISOLEUCINE--TRNA LIGASE, MITOCHONDRIAL"/>
    <property type="match status" value="1"/>
</dbReference>
<dbReference type="PANTHER" id="PTHR42765">
    <property type="entry name" value="SOLEUCYL-TRNA SYNTHETASE"/>
    <property type="match status" value="1"/>
</dbReference>
<dbReference type="Pfam" id="PF08264">
    <property type="entry name" value="Anticodon_1"/>
    <property type="match status" value="1"/>
</dbReference>
<dbReference type="Pfam" id="PF00133">
    <property type="entry name" value="tRNA-synt_1"/>
    <property type="match status" value="1"/>
</dbReference>
<dbReference type="PRINTS" id="PR00984">
    <property type="entry name" value="TRNASYNTHILE"/>
</dbReference>
<dbReference type="SUPFAM" id="SSF47323">
    <property type="entry name" value="Anticodon-binding domain of a subclass of class I aminoacyl-tRNA synthetases"/>
    <property type="match status" value="1"/>
</dbReference>
<dbReference type="SUPFAM" id="SSF52374">
    <property type="entry name" value="Nucleotidylyl transferase"/>
    <property type="match status" value="1"/>
</dbReference>
<dbReference type="SUPFAM" id="SSF50677">
    <property type="entry name" value="ValRS/IleRS/LeuRS editing domain"/>
    <property type="match status" value="1"/>
</dbReference>
<dbReference type="PROSITE" id="PS00178">
    <property type="entry name" value="AA_TRNA_LIGASE_I"/>
    <property type="match status" value="1"/>
</dbReference>
<gene>
    <name evidence="1" type="primary">ileS</name>
    <name type="ordered locus">MS1751</name>
</gene>
<comment type="function">
    <text evidence="1">Catalyzes the attachment of isoleucine to tRNA(Ile). As IleRS can inadvertently accommodate and process structurally similar amino acids such as valine, to avoid such errors it has two additional distinct tRNA(Ile)-dependent editing activities. One activity is designated as 'pretransfer' editing and involves the hydrolysis of activated Val-AMP. The other activity is designated 'posttransfer' editing and involves deacylation of mischarged Val-tRNA(Ile).</text>
</comment>
<comment type="catalytic activity">
    <reaction evidence="1">
        <text>tRNA(Ile) + L-isoleucine + ATP = L-isoleucyl-tRNA(Ile) + AMP + diphosphate</text>
        <dbReference type="Rhea" id="RHEA:11060"/>
        <dbReference type="Rhea" id="RHEA-COMP:9666"/>
        <dbReference type="Rhea" id="RHEA-COMP:9695"/>
        <dbReference type="ChEBI" id="CHEBI:30616"/>
        <dbReference type="ChEBI" id="CHEBI:33019"/>
        <dbReference type="ChEBI" id="CHEBI:58045"/>
        <dbReference type="ChEBI" id="CHEBI:78442"/>
        <dbReference type="ChEBI" id="CHEBI:78528"/>
        <dbReference type="ChEBI" id="CHEBI:456215"/>
        <dbReference type="EC" id="6.1.1.5"/>
    </reaction>
</comment>
<comment type="cofactor">
    <cofactor evidence="1">
        <name>Zn(2+)</name>
        <dbReference type="ChEBI" id="CHEBI:29105"/>
    </cofactor>
    <text evidence="1">Binds 1 zinc ion per subunit.</text>
</comment>
<comment type="subunit">
    <text evidence="1">Monomer.</text>
</comment>
<comment type="subcellular location">
    <subcellularLocation>
        <location evidence="1">Cytoplasm</location>
    </subcellularLocation>
</comment>
<comment type="domain">
    <text evidence="1">IleRS has two distinct active sites: one for aminoacylation and one for editing. The misactivated valine is translocated from the active site to the editing site, which sterically excludes the correctly activated isoleucine. The single editing site contains two valyl binding pockets, one specific for each substrate (Val-AMP or Val-tRNA(Ile)).</text>
</comment>
<comment type="similarity">
    <text evidence="1">Belongs to the class-I aminoacyl-tRNA synthetase family. IleS type 1 subfamily.</text>
</comment>
<feature type="chain" id="PRO_0000098413" description="Isoleucine--tRNA ligase">
    <location>
        <begin position="1"/>
        <end position="938"/>
    </location>
</feature>
<feature type="short sequence motif" description="'HIGH' region">
    <location>
        <begin position="65"/>
        <end position="75"/>
    </location>
</feature>
<feature type="short sequence motif" description="'KMSKS' region">
    <location>
        <begin position="609"/>
        <end position="613"/>
    </location>
</feature>
<feature type="binding site" evidence="1">
    <location>
        <position position="568"/>
    </location>
    <ligand>
        <name>L-isoleucyl-5'-AMP</name>
        <dbReference type="ChEBI" id="CHEBI:178002"/>
    </ligand>
</feature>
<feature type="binding site" evidence="1">
    <location>
        <position position="612"/>
    </location>
    <ligand>
        <name>ATP</name>
        <dbReference type="ChEBI" id="CHEBI:30616"/>
    </ligand>
</feature>
<feature type="binding site" evidence="1">
    <location>
        <position position="905"/>
    </location>
    <ligand>
        <name>Zn(2+)</name>
        <dbReference type="ChEBI" id="CHEBI:29105"/>
    </ligand>
</feature>
<feature type="binding site" evidence="1">
    <location>
        <position position="908"/>
    </location>
    <ligand>
        <name>Zn(2+)</name>
        <dbReference type="ChEBI" id="CHEBI:29105"/>
    </ligand>
</feature>
<feature type="binding site" evidence="1">
    <location>
        <position position="921"/>
    </location>
    <ligand>
        <name>Zn(2+)</name>
        <dbReference type="ChEBI" id="CHEBI:29105"/>
    </ligand>
</feature>
<feature type="binding site" evidence="1">
    <location>
        <position position="924"/>
    </location>
    <ligand>
        <name>Zn(2+)</name>
        <dbReference type="ChEBI" id="CHEBI:29105"/>
    </ligand>
</feature>